<feature type="chain" id="PRO_0000172723" description="Phosphatidylglycerol--prolipoprotein diacylglyceryl transferase">
    <location>
        <begin position="1"/>
        <end position="290"/>
    </location>
</feature>
<feature type="transmembrane region" description="Helical" evidence="1">
    <location>
        <begin position="21"/>
        <end position="41"/>
    </location>
</feature>
<feature type="transmembrane region" description="Helical" evidence="1">
    <location>
        <begin position="60"/>
        <end position="80"/>
    </location>
</feature>
<feature type="transmembrane region" description="Helical" evidence="1">
    <location>
        <begin position="96"/>
        <end position="116"/>
    </location>
</feature>
<feature type="transmembrane region" description="Helical" evidence="1">
    <location>
        <begin position="124"/>
        <end position="144"/>
    </location>
</feature>
<feature type="transmembrane region" description="Helical" evidence="1">
    <location>
        <begin position="199"/>
        <end position="219"/>
    </location>
</feature>
<feature type="transmembrane region" description="Helical" evidence="1">
    <location>
        <begin position="226"/>
        <end position="246"/>
    </location>
</feature>
<feature type="transmembrane region" description="Helical" evidence="1">
    <location>
        <begin position="260"/>
        <end position="280"/>
    </location>
</feature>
<feature type="binding site" evidence="1">
    <location>
        <position position="143"/>
    </location>
    <ligand>
        <name>a 1,2-diacyl-sn-glycero-3-phospho-(1'-sn-glycerol)</name>
        <dbReference type="ChEBI" id="CHEBI:64716"/>
    </ligand>
</feature>
<dbReference type="EC" id="2.5.1.145" evidence="1"/>
<dbReference type="EMBL" id="BX936398">
    <property type="protein sequence ID" value="CAH22272.1"/>
    <property type="molecule type" value="Genomic_DNA"/>
</dbReference>
<dbReference type="RefSeq" id="WP_002211383.1">
    <property type="nucleotide sequence ID" value="NZ_CP009712.1"/>
</dbReference>
<dbReference type="SMR" id="Q667F8"/>
<dbReference type="GeneID" id="57973850"/>
<dbReference type="KEGG" id="ypo:BZ17_3583"/>
<dbReference type="KEGG" id="yps:YPTB3034"/>
<dbReference type="PATRIC" id="fig|273123.14.peg.3766"/>
<dbReference type="UniPathway" id="UPA00664"/>
<dbReference type="Proteomes" id="UP000001011">
    <property type="component" value="Chromosome"/>
</dbReference>
<dbReference type="GO" id="GO:0005886">
    <property type="term" value="C:plasma membrane"/>
    <property type="evidence" value="ECO:0007669"/>
    <property type="project" value="UniProtKB-SubCell"/>
</dbReference>
<dbReference type="GO" id="GO:0008961">
    <property type="term" value="F:phosphatidylglycerol-prolipoprotein diacylglyceryl transferase activity"/>
    <property type="evidence" value="ECO:0007669"/>
    <property type="project" value="UniProtKB-UniRule"/>
</dbReference>
<dbReference type="GO" id="GO:0042158">
    <property type="term" value="P:lipoprotein biosynthetic process"/>
    <property type="evidence" value="ECO:0007669"/>
    <property type="project" value="UniProtKB-UniRule"/>
</dbReference>
<dbReference type="HAMAP" id="MF_01147">
    <property type="entry name" value="Lgt"/>
    <property type="match status" value="1"/>
</dbReference>
<dbReference type="InterPro" id="IPR001640">
    <property type="entry name" value="Lgt"/>
</dbReference>
<dbReference type="NCBIfam" id="TIGR00544">
    <property type="entry name" value="lgt"/>
    <property type="match status" value="1"/>
</dbReference>
<dbReference type="PANTHER" id="PTHR30589:SF0">
    <property type="entry name" value="PHOSPHATIDYLGLYCEROL--PROLIPOPROTEIN DIACYLGLYCERYL TRANSFERASE"/>
    <property type="match status" value="1"/>
</dbReference>
<dbReference type="PANTHER" id="PTHR30589">
    <property type="entry name" value="PROLIPOPROTEIN DIACYLGLYCERYL TRANSFERASE"/>
    <property type="match status" value="1"/>
</dbReference>
<dbReference type="Pfam" id="PF01790">
    <property type="entry name" value="LGT"/>
    <property type="match status" value="1"/>
</dbReference>
<dbReference type="PROSITE" id="PS01311">
    <property type="entry name" value="LGT"/>
    <property type="match status" value="1"/>
</dbReference>
<comment type="function">
    <text evidence="1">Catalyzes the transfer of the diacylglyceryl group from phosphatidylglycerol to the sulfhydryl group of the N-terminal cysteine of a prolipoprotein, the first step in the formation of mature lipoproteins.</text>
</comment>
<comment type="catalytic activity">
    <reaction evidence="1">
        <text>L-cysteinyl-[prolipoprotein] + a 1,2-diacyl-sn-glycero-3-phospho-(1'-sn-glycerol) = an S-1,2-diacyl-sn-glyceryl-L-cysteinyl-[prolipoprotein] + sn-glycerol 1-phosphate + H(+)</text>
        <dbReference type="Rhea" id="RHEA:56712"/>
        <dbReference type="Rhea" id="RHEA-COMP:14679"/>
        <dbReference type="Rhea" id="RHEA-COMP:14680"/>
        <dbReference type="ChEBI" id="CHEBI:15378"/>
        <dbReference type="ChEBI" id="CHEBI:29950"/>
        <dbReference type="ChEBI" id="CHEBI:57685"/>
        <dbReference type="ChEBI" id="CHEBI:64716"/>
        <dbReference type="ChEBI" id="CHEBI:140658"/>
        <dbReference type="EC" id="2.5.1.145"/>
    </reaction>
</comment>
<comment type="pathway">
    <text evidence="1">Protein modification; lipoprotein biosynthesis (diacylglyceryl transfer).</text>
</comment>
<comment type="subcellular location">
    <subcellularLocation>
        <location evidence="1">Cell inner membrane</location>
        <topology evidence="1">Multi-pass membrane protein</topology>
    </subcellularLocation>
</comment>
<comment type="similarity">
    <text evidence="1">Belongs to the Lgt family.</text>
</comment>
<name>LGT_YERPS</name>
<evidence type="ECO:0000255" key="1">
    <source>
        <dbReference type="HAMAP-Rule" id="MF_01147"/>
    </source>
</evidence>
<organism>
    <name type="scientific">Yersinia pseudotuberculosis serotype I (strain IP32953)</name>
    <dbReference type="NCBI Taxonomy" id="273123"/>
    <lineage>
        <taxon>Bacteria</taxon>
        <taxon>Pseudomonadati</taxon>
        <taxon>Pseudomonadota</taxon>
        <taxon>Gammaproteobacteria</taxon>
        <taxon>Enterobacterales</taxon>
        <taxon>Yersiniaceae</taxon>
        <taxon>Yersinia</taxon>
    </lineage>
</organism>
<gene>
    <name evidence="1" type="primary">lgt</name>
    <name type="ordered locus">YPTB3034</name>
</gene>
<protein>
    <recommendedName>
        <fullName evidence="1">Phosphatidylglycerol--prolipoprotein diacylglyceryl transferase</fullName>
        <ecNumber evidence="1">2.5.1.145</ecNumber>
    </recommendedName>
</protein>
<keyword id="KW-0997">Cell inner membrane</keyword>
<keyword id="KW-1003">Cell membrane</keyword>
<keyword id="KW-0472">Membrane</keyword>
<keyword id="KW-0808">Transferase</keyword>
<keyword id="KW-0812">Transmembrane</keyword>
<keyword id="KW-1133">Transmembrane helix</keyword>
<reference key="1">
    <citation type="journal article" date="2004" name="Proc. Natl. Acad. Sci. U.S.A.">
        <title>Insights into the evolution of Yersinia pestis through whole-genome comparison with Yersinia pseudotuberculosis.</title>
        <authorList>
            <person name="Chain P.S.G."/>
            <person name="Carniel E."/>
            <person name="Larimer F.W."/>
            <person name="Lamerdin J."/>
            <person name="Stoutland P.O."/>
            <person name="Regala W.M."/>
            <person name="Georgescu A.M."/>
            <person name="Vergez L.M."/>
            <person name="Land M.L."/>
            <person name="Motin V.L."/>
            <person name="Brubaker R.R."/>
            <person name="Fowler J."/>
            <person name="Hinnebusch J."/>
            <person name="Marceau M."/>
            <person name="Medigue C."/>
            <person name="Simonet M."/>
            <person name="Chenal-Francisque V."/>
            <person name="Souza B."/>
            <person name="Dacheux D."/>
            <person name="Elliott J.M."/>
            <person name="Derbise A."/>
            <person name="Hauser L.J."/>
            <person name="Garcia E."/>
        </authorList>
    </citation>
    <scope>NUCLEOTIDE SEQUENCE [LARGE SCALE GENOMIC DNA]</scope>
    <source>
        <strain>IP32953</strain>
    </source>
</reference>
<proteinExistence type="inferred from homology"/>
<accession>Q667F8</accession>
<sequence length="290" mass="32809">MSNSYLAFPKFDPVIFSIGPVSLHWYGLMYLVGFVFAMWLAVRRANKPGSGWTKEEVENLLYAGFLGVFIGGRVGYVLFYNLPMFLDNPLYLFKVWDGGMSFHGGLIGVICVMLWFARRTKRNFFQVADFIAPLIPFGLGAGRLGNFINAELWGRVTTDTPWAMLFPTSRNTDIAIVAADPAKWQAIFNQYGVLPRHPSQLYEMILEGVVLFIILNVFIRKPRPMGSVSGLFLIGYGTFRIIVECFRQPDEQLGLFEGMISMGQILSVPMILAGIIMMIWAYRRPTQKLS</sequence>